<accession>A1JQU7</accession>
<gene>
    <name type="ordered locus">YE3666</name>
</gene>
<dbReference type="EMBL" id="AM286415">
    <property type="protein sequence ID" value="CAL13694.1"/>
    <property type="molecule type" value="Genomic_DNA"/>
</dbReference>
<dbReference type="RefSeq" id="WP_005174105.1">
    <property type="nucleotide sequence ID" value="NC_008800.1"/>
</dbReference>
<dbReference type="RefSeq" id="YP_001007822.1">
    <property type="nucleotide sequence ID" value="NC_008800.1"/>
</dbReference>
<dbReference type="SMR" id="A1JQU7"/>
<dbReference type="KEGG" id="yen:YE3666"/>
<dbReference type="PATRIC" id="fig|393305.7.peg.3903"/>
<dbReference type="eggNOG" id="COG5463">
    <property type="taxonomic scope" value="Bacteria"/>
</dbReference>
<dbReference type="HOGENOM" id="CLU_095624_0_0_6"/>
<dbReference type="OrthoDB" id="5903948at2"/>
<dbReference type="Proteomes" id="UP000000642">
    <property type="component" value="Chromosome"/>
</dbReference>
<dbReference type="HAMAP" id="MF_01188">
    <property type="entry name" value="UPF0441"/>
    <property type="match status" value="1"/>
</dbReference>
<dbReference type="InterPro" id="IPR009576">
    <property type="entry name" value="Biofilm_formation_YgiB"/>
</dbReference>
<dbReference type="NCBIfam" id="NF008655">
    <property type="entry name" value="PRK11653.1"/>
    <property type="match status" value="1"/>
</dbReference>
<dbReference type="Pfam" id="PF06693">
    <property type="entry name" value="DUF1190"/>
    <property type="match status" value="1"/>
</dbReference>
<reference key="1">
    <citation type="journal article" date="2006" name="PLoS Genet.">
        <title>The complete genome sequence and comparative genome analysis of the high pathogenicity Yersinia enterocolitica strain 8081.</title>
        <authorList>
            <person name="Thomson N.R."/>
            <person name="Howard S."/>
            <person name="Wren B.W."/>
            <person name="Holden M.T.G."/>
            <person name="Crossman L."/>
            <person name="Challis G.L."/>
            <person name="Churcher C."/>
            <person name="Mungall K."/>
            <person name="Brooks K."/>
            <person name="Chillingworth T."/>
            <person name="Feltwell T."/>
            <person name="Abdellah Z."/>
            <person name="Hauser H."/>
            <person name="Jagels K."/>
            <person name="Maddison M."/>
            <person name="Moule S."/>
            <person name="Sanders M."/>
            <person name="Whitehead S."/>
            <person name="Quail M.A."/>
            <person name="Dougan G."/>
            <person name="Parkhill J."/>
            <person name="Prentice M.B."/>
        </authorList>
    </citation>
    <scope>NUCLEOTIDE SEQUENCE [LARGE SCALE GENOMIC DNA]</scope>
    <source>
        <strain>NCTC 13174 / 8081</strain>
    </source>
</reference>
<feature type="chain" id="PRO_5000201337" description="UPF0441 protein YE3666">
    <location>
        <begin position="1"/>
        <end position="229"/>
    </location>
</feature>
<feature type="region of interest" description="Disordered" evidence="2">
    <location>
        <begin position="101"/>
        <end position="125"/>
    </location>
</feature>
<feature type="region of interest" description="Disordered" evidence="2">
    <location>
        <begin position="190"/>
        <end position="229"/>
    </location>
</feature>
<feature type="compositionally biased region" description="Low complexity" evidence="2">
    <location>
        <begin position="109"/>
        <end position="120"/>
    </location>
</feature>
<feature type="compositionally biased region" description="Low complexity" evidence="2">
    <location>
        <begin position="214"/>
        <end position="229"/>
    </location>
</feature>
<name>Y3666_YERE8</name>
<proteinExistence type="inferred from homology"/>
<sequence length="229" mass="23986">MKRTQNINQETFRKSWRSYRLAPVALAISAVFMLAGCEKTDETVSLYQNADDCSAANPSKSAECTTAYNTALQEAAKTAPKYATREDCVAEFGESQCTQAPAQAGMVPTSSSSSETTAAAPQQSGSMWMPLMAGYMMGRMMGGGASQPLFTSKAPNSPANGKFVDATGKNFGSATTGRTMTVPRTAMAPKPAVTNTITRGGFGESVAKQSSMQRSAATSSKTSTRSMGG</sequence>
<protein>
    <recommendedName>
        <fullName evidence="1">UPF0441 protein YE3666</fullName>
    </recommendedName>
</protein>
<organism>
    <name type="scientific">Yersinia enterocolitica serotype O:8 / biotype 1B (strain NCTC 13174 / 8081)</name>
    <dbReference type="NCBI Taxonomy" id="393305"/>
    <lineage>
        <taxon>Bacteria</taxon>
        <taxon>Pseudomonadati</taxon>
        <taxon>Pseudomonadota</taxon>
        <taxon>Gammaproteobacteria</taxon>
        <taxon>Enterobacterales</taxon>
        <taxon>Yersiniaceae</taxon>
        <taxon>Yersinia</taxon>
    </lineage>
</organism>
<evidence type="ECO:0000255" key="1">
    <source>
        <dbReference type="HAMAP-Rule" id="MF_01188"/>
    </source>
</evidence>
<evidence type="ECO:0000256" key="2">
    <source>
        <dbReference type="SAM" id="MobiDB-lite"/>
    </source>
</evidence>
<comment type="similarity">
    <text evidence="1">Belongs to the UPF0441 family.</text>
</comment>